<comment type="function">
    <text evidence="4 5">Involved in biosynthetic vesicle transport to lysosomes (PubMed:24554766). Acts as a cell growth regulator (PubMed:21729695). Also has a crucial role in controlling organ rotation by regulating membrane-localized Notch receptor endocytosis and subsequent degradation (PubMed:21729695). Regulation of organ rotation is not by induction of autophagy (PubMed:21729695).</text>
</comment>
<comment type="developmental stage">
    <text evidence="4">Expressed throughout development, levels increasing from embryo to pupa, then decreasing in adults with higher levels in adult males than females.</text>
</comment>
<comment type="disruption phenotype">
    <text evidence="4 5">Larval lethal at 3rd instar (PubMed:21729695, PubMed:24554766). Adult viable flies exhibit genitalia-specific organ rotation phenotypes (PubMed:21729695).</text>
</comment>
<dbReference type="EMBL" id="AE014134">
    <property type="protein sequence ID" value="AAF53277.1"/>
    <property type="molecule type" value="Genomic_DNA"/>
</dbReference>
<dbReference type="EMBL" id="AY069353">
    <property type="protein sequence ID" value="AAL39498.1"/>
    <property type="molecule type" value="mRNA"/>
</dbReference>
<dbReference type="RefSeq" id="NP_609632.1">
    <property type="nucleotide sequence ID" value="NM_135788.3"/>
</dbReference>
<dbReference type="SMR" id="Q9VK07"/>
<dbReference type="BioGRID" id="60773">
    <property type="interactions" value="9"/>
</dbReference>
<dbReference type="FunCoup" id="Q9VK07">
    <property type="interactions" value="509"/>
</dbReference>
<dbReference type="IntAct" id="Q9VK07">
    <property type="interactions" value="1"/>
</dbReference>
<dbReference type="STRING" id="7227.FBpp0080039"/>
<dbReference type="iPTMnet" id="Q9VK07"/>
<dbReference type="PaxDb" id="7227-FBpp0080039"/>
<dbReference type="DNASU" id="34735"/>
<dbReference type="EnsemblMetazoa" id="FBtr0080460">
    <property type="protein sequence ID" value="FBpp0080039"/>
    <property type="gene ID" value="FBgn0032499"/>
</dbReference>
<dbReference type="GeneID" id="34735"/>
<dbReference type="KEGG" id="dme:Dmel_CG6116"/>
<dbReference type="UCSC" id="CG6116-RA">
    <property type="organism name" value="d. melanogaster"/>
</dbReference>
<dbReference type="AGR" id="FB:FBgn0032499"/>
<dbReference type="CTD" id="7405"/>
<dbReference type="FlyBase" id="FBgn0032499">
    <property type="gene designation" value="Uvrag"/>
</dbReference>
<dbReference type="VEuPathDB" id="VectorBase:FBgn0032499"/>
<dbReference type="eggNOG" id="KOG2896">
    <property type="taxonomic scope" value="Eukaryota"/>
</dbReference>
<dbReference type="GeneTree" id="ENSGT00390000012877"/>
<dbReference type="InParanoid" id="Q9VK07"/>
<dbReference type="OMA" id="PRCREWL"/>
<dbReference type="OrthoDB" id="72772at2759"/>
<dbReference type="PhylomeDB" id="Q9VK07"/>
<dbReference type="Reactome" id="R-DME-1632852">
    <property type="pathway name" value="Macroautophagy"/>
</dbReference>
<dbReference type="BioGRID-ORCS" id="34735">
    <property type="hits" value="0 hits in 1 CRISPR screen"/>
</dbReference>
<dbReference type="GenomeRNAi" id="34735"/>
<dbReference type="PRO" id="PR:Q9VK07"/>
<dbReference type="Proteomes" id="UP000000803">
    <property type="component" value="Chromosome 2L"/>
</dbReference>
<dbReference type="Bgee" id="FBgn0032499">
    <property type="expression patterns" value="Expressed in spermatocyte cyst cell (Drosophila) in testis and 106 other cell types or tissues"/>
</dbReference>
<dbReference type="ExpressionAtlas" id="Q9VK07">
    <property type="expression patterns" value="baseline and differential"/>
</dbReference>
<dbReference type="GO" id="GO:0005768">
    <property type="term" value="C:endosome"/>
    <property type="evidence" value="ECO:0000318"/>
    <property type="project" value="GO_Central"/>
</dbReference>
<dbReference type="GO" id="GO:0000323">
    <property type="term" value="C:lytic vacuole"/>
    <property type="evidence" value="ECO:0000318"/>
    <property type="project" value="GO_Central"/>
</dbReference>
<dbReference type="GO" id="GO:0000149">
    <property type="term" value="F:SNARE binding"/>
    <property type="evidence" value="ECO:0000318"/>
    <property type="project" value="GO_Central"/>
</dbReference>
<dbReference type="GO" id="GO:0048803">
    <property type="term" value="P:imaginal disc-derived male genitalia morphogenesis"/>
    <property type="evidence" value="ECO:0000315"/>
    <property type="project" value="FlyBase"/>
</dbReference>
<dbReference type="GO" id="GO:0008285">
    <property type="term" value="P:negative regulation of cell population proliferation"/>
    <property type="evidence" value="ECO:0000315"/>
    <property type="project" value="FlyBase"/>
</dbReference>
<dbReference type="GO" id="GO:0045746">
    <property type="term" value="P:negative regulation of Notch signaling pathway"/>
    <property type="evidence" value="ECO:0000316"/>
    <property type="project" value="FlyBase"/>
</dbReference>
<dbReference type="GO" id="GO:0016322">
    <property type="term" value="P:neuron remodeling"/>
    <property type="evidence" value="ECO:0000315"/>
    <property type="project" value="FlyBase"/>
</dbReference>
<dbReference type="GO" id="GO:0007219">
    <property type="term" value="P:Notch signaling pathway"/>
    <property type="evidence" value="ECO:0007669"/>
    <property type="project" value="UniProtKB-KW"/>
</dbReference>
<dbReference type="GO" id="GO:0006909">
    <property type="term" value="P:phagocytosis"/>
    <property type="evidence" value="ECO:0000315"/>
    <property type="project" value="FlyBase"/>
</dbReference>
<dbReference type="GO" id="GO:0048260">
    <property type="term" value="P:positive regulation of receptor-mediated endocytosis"/>
    <property type="evidence" value="ECO:0000315"/>
    <property type="project" value="FlyBase"/>
</dbReference>
<dbReference type="GO" id="GO:0006622">
    <property type="term" value="P:protein targeting to lysosome"/>
    <property type="evidence" value="ECO:0000315"/>
    <property type="project" value="FlyBase"/>
</dbReference>
<dbReference type="GO" id="GO:0035493">
    <property type="term" value="P:SNARE complex assembly"/>
    <property type="evidence" value="ECO:0000318"/>
    <property type="project" value="GO_Central"/>
</dbReference>
<dbReference type="PANTHER" id="PTHR15157">
    <property type="entry name" value="UV RADIATION RESISTANCE-ASSOCIATED GENE PROTEIN"/>
    <property type="match status" value="1"/>
</dbReference>
<dbReference type="PANTHER" id="PTHR15157:SF5">
    <property type="entry name" value="UV RADIATION RESISTANCE-ASSOCIATED GENE PROTEIN"/>
    <property type="match status" value="1"/>
</dbReference>
<gene>
    <name type="primary">Uvrag</name>
    <name type="ORF">CG6116</name>
</gene>
<accession>Q9VK07</accession>
<name>UVRAG_DROME</name>
<evidence type="ECO:0000255" key="1"/>
<evidence type="ECO:0000256" key="2">
    <source>
        <dbReference type="SAM" id="MobiDB-lite"/>
    </source>
</evidence>
<evidence type="ECO:0000269" key="3">
    <source>
    </source>
</evidence>
<evidence type="ECO:0000269" key="4">
    <source>
    </source>
</evidence>
<evidence type="ECO:0000269" key="5">
    <source>
    </source>
</evidence>
<evidence type="ECO:0000312" key="6">
    <source>
        <dbReference type="Proteomes" id="UP000000803"/>
    </source>
</evidence>
<feature type="chain" id="PRO_0000065749" description="UV radiation resistance-associated gene protein">
    <location>
        <begin position="1"/>
        <end position="696"/>
    </location>
</feature>
<feature type="region of interest" description="Disordered" evidence="2">
    <location>
        <begin position="666"/>
        <end position="696"/>
    </location>
</feature>
<feature type="coiled-coil region" evidence="1">
    <location>
        <begin position="251"/>
        <end position="278"/>
    </location>
</feature>
<feature type="coiled-coil region" evidence="1">
    <location>
        <begin position="330"/>
        <end position="394"/>
    </location>
</feature>
<feature type="compositionally biased region" description="Polar residues" evidence="2">
    <location>
        <begin position="681"/>
        <end position="696"/>
    </location>
</feature>
<feature type="modified residue" description="Phosphoserine" evidence="3">
    <location>
        <position position="214"/>
    </location>
</feature>
<feature type="modified residue" description="Phosphoserine" evidence="3">
    <location>
        <position position="218"/>
    </location>
</feature>
<feature type="modified residue" description="Phosphoserine" evidence="3">
    <location>
        <position position="666"/>
    </location>
</feature>
<feature type="modified residue" description="Phosphotyrosine" evidence="3">
    <location>
        <position position="667"/>
    </location>
</feature>
<feature type="modified residue" description="Phosphoserine" evidence="3">
    <location>
        <position position="668"/>
    </location>
</feature>
<feature type="modified residue" description="Phosphoserine" evidence="3">
    <location>
        <position position="685"/>
    </location>
</feature>
<keyword id="KW-0175">Coiled coil</keyword>
<keyword id="KW-0341">Growth regulation</keyword>
<keyword id="KW-0914">Notch signaling pathway</keyword>
<keyword id="KW-0597">Phosphoprotein</keyword>
<keyword id="KW-1185">Reference proteome</keyword>
<keyword id="KW-0813">Transport</keyword>
<proteinExistence type="evidence at protein level"/>
<organism evidence="6">
    <name type="scientific">Drosophila melanogaster</name>
    <name type="common">Fruit fly</name>
    <dbReference type="NCBI Taxonomy" id="7227"/>
    <lineage>
        <taxon>Eukaryota</taxon>
        <taxon>Metazoa</taxon>
        <taxon>Ecdysozoa</taxon>
        <taxon>Arthropoda</taxon>
        <taxon>Hexapoda</taxon>
        <taxon>Insecta</taxon>
        <taxon>Pterygota</taxon>
        <taxon>Neoptera</taxon>
        <taxon>Endopterygota</taxon>
        <taxon>Diptera</taxon>
        <taxon>Brachycera</taxon>
        <taxon>Muscomorpha</taxon>
        <taxon>Ephydroidea</taxon>
        <taxon>Drosophilidae</taxon>
        <taxon>Drosophila</taxon>
        <taxon>Sophophora</taxon>
    </lineage>
</organism>
<sequence length="696" mass="80690">MNLRPRCRKWLPLATQQLRLRNLNRIQGFNIESWPHEKSLELDDPDDVLLYYTLHTDKASEAFYTSEKLPQRHQQQKWAEICTDDEAWRKTNAQCVCVKVWKHYSAERRDGQPPEVEQRHKDVFGRSQLTPSRLPRPPELLFSWGVYFSGLIPLSPLTLSQCGRNCLVFQLNGEQFASPSMISEQALQSQLHLHYQKYAEEEKLEEPQDEGINSPAVSRSSSPVLRMSTMRYAQLKCQRQEIRRSNNLEKLLTLQRLQRLHQQKRRQMAEVCREIARLSVHCVTRNELRLKPRTTSLSGDYSAHQYHSMGRALSVLLAEQQQIAPLTLYNAQQLTRRIEALSSQQRLLKAERETFRQRNERTRQLLKEMREQREAQQWELHSQRHRLEKERLELRTLAPQHLEQRDQKRQIERQVERRMSTLVLELQEIYNIQNVGGRQFSICGIAFPHMEQYTSESRQAANAQLLDNVSPLAVSAALGYVAHLVQMLAIIMDRPLRNRILYEPSKARIVDDIKELTYTTREFPLYTRSILPSQQTKYAIYLLRQNVSQLCFDITGQCDLRNTFGNLLELFSTLRYIERTQRDEVDERDGTAVGAGCGEARLANGLTAPHLSQSHSSVDMNHVPLPTGVNAVKDALLQQLLPPGVSEALAIEGYASTQRICRSVGSYSDGEDEFRPRLEHNYSNSDSNITLQTERS</sequence>
<protein>
    <recommendedName>
        <fullName>UV radiation resistance-associated gene protein</fullName>
    </recommendedName>
    <alternativeName>
        <fullName>UV-resistance associated gene</fullName>
    </alternativeName>
</protein>
<reference key="1">
    <citation type="journal article" date="2000" name="Science">
        <title>The genome sequence of Drosophila melanogaster.</title>
        <authorList>
            <person name="Adams M.D."/>
            <person name="Celniker S.E."/>
            <person name="Holt R.A."/>
            <person name="Evans C.A."/>
            <person name="Gocayne J.D."/>
            <person name="Amanatides P.G."/>
            <person name="Scherer S.E."/>
            <person name="Li P.W."/>
            <person name="Hoskins R.A."/>
            <person name="Galle R.F."/>
            <person name="George R.A."/>
            <person name="Lewis S.E."/>
            <person name="Richards S."/>
            <person name="Ashburner M."/>
            <person name="Henderson S.N."/>
            <person name="Sutton G.G."/>
            <person name="Wortman J.R."/>
            <person name="Yandell M.D."/>
            <person name="Zhang Q."/>
            <person name="Chen L.X."/>
            <person name="Brandon R.C."/>
            <person name="Rogers Y.-H.C."/>
            <person name="Blazej R.G."/>
            <person name="Champe M."/>
            <person name="Pfeiffer B.D."/>
            <person name="Wan K.H."/>
            <person name="Doyle C."/>
            <person name="Baxter E.G."/>
            <person name="Helt G."/>
            <person name="Nelson C.R."/>
            <person name="Miklos G.L.G."/>
            <person name="Abril J.F."/>
            <person name="Agbayani A."/>
            <person name="An H.-J."/>
            <person name="Andrews-Pfannkoch C."/>
            <person name="Baldwin D."/>
            <person name="Ballew R.M."/>
            <person name="Basu A."/>
            <person name="Baxendale J."/>
            <person name="Bayraktaroglu L."/>
            <person name="Beasley E.M."/>
            <person name="Beeson K.Y."/>
            <person name="Benos P.V."/>
            <person name="Berman B.P."/>
            <person name="Bhandari D."/>
            <person name="Bolshakov S."/>
            <person name="Borkova D."/>
            <person name="Botchan M.R."/>
            <person name="Bouck J."/>
            <person name="Brokstein P."/>
            <person name="Brottier P."/>
            <person name="Burtis K.C."/>
            <person name="Busam D.A."/>
            <person name="Butler H."/>
            <person name="Cadieu E."/>
            <person name="Center A."/>
            <person name="Chandra I."/>
            <person name="Cherry J.M."/>
            <person name="Cawley S."/>
            <person name="Dahlke C."/>
            <person name="Davenport L.B."/>
            <person name="Davies P."/>
            <person name="de Pablos B."/>
            <person name="Delcher A."/>
            <person name="Deng Z."/>
            <person name="Mays A.D."/>
            <person name="Dew I."/>
            <person name="Dietz S.M."/>
            <person name="Dodson K."/>
            <person name="Doup L.E."/>
            <person name="Downes M."/>
            <person name="Dugan-Rocha S."/>
            <person name="Dunkov B.C."/>
            <person name="Dunn P."/>
            <person name="Durbin K.J."/>
            <person name="Evangelista C.C."/>
            <person name="Ferraz C."/>
            <person name="Ferriera S."/>
            <person name="Fleischmann W."/>
            <person name="Fosler C."/>
            <person name="Gabrielian A.E."/>
            <person name="Garg N.S."/>
            <person name="Gelbart W.M."/>
            <person name="Glasser K."/>
            <person name="Glodek A."/>
            <person name="Gong F."/>
            <person name="Gorrell J.H."/>
            <person name="Gu Z."/>
            <person name="Guan P."/>
            <person name="Harris M."/>
            <person name="Harris N.L."/>
            <person name="Harvey D.A."/>
            <person name="Heiman T.J."/>
            <person name="Hernandez J.R."/>
            <person name="Houck J."/>
            <person name="Hostin D."/>
            <person name="Houston K.A."/>
            <person name="Howland T.J."/>
            <person name="Wei M.-H."/>
            <person name="Ibegwam C."/>
            <person name="Jalali M."/>
            <person name="Kalush F."/>
            <person name="Karpen G.H."/>
            <person name="Ke Z."/>
            <person name="Kennison J.A."/>
            <person name="Ketchum K.A."/>
            <person name="Kimmel B.E."/>
            <person name="Kodira C.D."/>
            <person name="Kraft C.L."/>
            <person name="Kravitz S."/>
            <person name="Kulp D."/>
            <person name="Lai Z."/>
            <person name="Lasko P."/>
            <person name="Lei Y."/>
            <person name="Levitsky A.A."/>
            <person name="Li J.H."/>
            <person name="Li Z."/>
            <person name="Liang Y."/>
            <person name="Lin X."/>
            <person name="Liu X."/>
            <person name="Mattei B."/>
            <person name="McIntosh T.C."/>
            <person name="McLeod M.P."/>
            <person name="McPherson D."/>
            <person name="Merkulov G."/>
            <person name="Milshina N.V."/>
            <person name="Mobarry C."/>
            <person name="Morris J."/>
            <person name="Moshrefi A."/>
            <person name="Mount S.M."/>
            <person name="Moy M."/>
            <person name="Murphy B."/>
            <person name="Murphy L."/>
            <person name="Muzny D.M."/>
            <person name="Nelson D.L."/>
            <person name="Nelson D.R."/>
            <person name="Nelson K.A."/>
            <person name="Nixon K."/>
            <person name="Nusskern D.R."/>
            <person name="Pacleb J.M."/>
            <person name="Palazzolo M."/>
            <person name="Pittman G.S."/>
            <person name="Pan S."/>
            <person name="Pollard J."/>
            <person name="Puri V."/>
            <person name="Reese M.G."/>
            <person name="Reinert K."/>
            <person name="Remington K."/>
            <person name="Saunders R.D.C."/>
            <person name="Scheeler F."/>
            <person name="Shen H."/>
            <person name="Shue B.C."/>
            <person name="Siden-Kiamos I."/>
            <person name="Simpson M."/>
            <person name="Skupski M.P."/>
            <person name="Smith T.J."/>
            <person name="Spier E."/>
            <person name="Spradling A.C."/>
            <person name="Stapleton M."/>
            <person name="Strong R."/>
            <person name="Sun E."/>
            <person name="Svirskas R."/>
            <person name="Tector C."/>
            <person name="Turner R."/>
            <person name="Venter E."/>
            <person name="Wang A.H."/>
            <person name="Wang X."/>
            <person name="Wang Z.-Y."/>
            <person name="Wassarman D.A."/>
            <person name="Weinstock G.M."/>
            <person name="Weissenbach J."/>
            <person name="Williams S.M."/>
            <person name="Woodage T."/>
            <person name="Worley K.C."/>
            <person name="Wu D."/>
            <person name="Yang S."/>
            <person name="Yao Q.A."/>
            <person name="Ye J."/>
            <person name="Yeh R.-F."/>
            <person name="Zaveri J.S."/>
            <person name="Zhan M."/>
            <person name="Zhang G."/>
            <person name="Zhao Q."/>
            <person name="Zheng L."/>
            <person name="Zheng X.H."/>
            <person name="Zhong F.N."/>
            <person name="Zhong W."/>
            <person name="Zhou X."/>
            <person name="Zhu S.C."/>
            <person name="Zhu X."/>
            <person name="Smith H.O."/>
            <person name="Gibbs R.A."/>
            <person name="Myers E.W."/>
            <person name="Rubin G.M."/>
            <person name="Venter J.C."/>
        </authorList>
    </citation>
    <scope>NUCLEOTIDE SEQUENCE [LARGE SCALE GENOMIC DNA]</scope>
    <source>
        <strain>Berkeley</strain>
    </source>
</reference>
<reference key="2">
    <citation type="journal article" date="2002" name="Genome Biol.">
        <title>Annotation of the Drosophila melanogaster euchromatic genome: a systematic review.</title>
        <authorList>
            <person name="Misra S."/>
            <person name="Crosby M.A."/>
            <person name="Mungall C.J."/>
            <person name="Matthews B.B."/>
            <person name="Campbell K.S."/>
            <person name="Hradecky P."/>
            <person name="Huang Y."/>
            <person name="Kaminker J.S."/>
            <person name="Millburn G.H."/>
            <person name="Prochnik S.E."/>
            <person name="Smith C.D."/>
            <person name="Tupy J.L."/>
            <person name="Whitfield E.J."/>
            <person name="Bayraktaroglu L."/>
            <person name="Berman B.P."/>
            <person name="Bettencourt B.R."/>
            <person name="Celniker S.E."/>
            <person name="de Grey A.D.N.J."/>
            <person name="Drysdale R.A."/>
            <person name="Harris N.L."/>
            <person name="Richter J."/>
            <person name="Russo S."/>
            <person name="Schroeder A.J."/>
            <person name="Shu S.Q."/>
            <person name="Stapleton M."/>
            <person name="Yamada C."/>
            <person name="Ashburner M."/>
            <person name="Gelbart W.M."/>
            <person name="Rubin G.M."/>
            <person name="Lewis S.E."/>
        </authorList>
    </citation>
    <scope>GENOME REANNOTATION</scope>
    <source>
        <strain>Berkeley</strain>
    </source>
</reference>
<reference key="3">
    <citation type="journal article" date="2002" name="Genome Biol.">
        <title>A Drosophila full-length cDNA resource.</title>
        <authorList>
            <person name="Stapleton M."/>
            <person name="Carlson J.W."/>
            <person name="Brokstein P."/>
            <person name="Yu C."/>
            <person name="Champe M."/>
            <person name="George R.A."/>
            <person name="Guarin H."/>
            <person name="Kronmiller B."/>
            <person name="Pacleb J.M."/>
            <person name="Park S."/>
            <person name="Wan K.H."/>
            <person name="Rubin G.M."/>
            <person name="Celniker S.E."/>
        </authorList>
    </citation>
    <scope>NUCLEOTIDE SEQUENCE [LARGE SCALE MRNA]</scope>
    <source>
        <strain>Berkeley</strain>
        <tissue>Embryo</tissue>
    </source>
</reference>
<reference key="4">
    <citation type="journal article" date="2008" name="J. Proteome Res.">
        <title>Phosphoproteome analysis of Drosophila melanogaster embryos.</title>
        <authorList>
            <person name="Zhai B."/>
            <person name="Villen J."/>
            <person name="Beausoleil S.A."/>
            <person name="Mintseris J."/>
            <person name="Gygi S.P."/>
        </authorList>
    </citation>
    <scope>PHOSPHORYLATION [LARGE SCALE ANALYSIS] AT SER-214; SER-218; SER-666; TYR-667; SER-668 AND SER-685</scope>
    <scope>IDENTIFICATION BY MASS SPECTROMETRY</scope>
    <source>
        <tissue>Embryo</tissue>
    </source>
</reference>
<reference key="5">
    <citation type="journal article" date="2011" name="Dev. Biol.">
        <title>UVRAG is required for organ rotation by regulating Notch endocytosis in Drosophila.</title>
        <authorList>
            <person name="Lee G."/>
            <person name="Liang C."/>
            <person name="Park G."/>
            <person name="Jang C."/>
            <person name="Jung J.U."/>
            <person name="Chung J."/>
        </authorList>
    </citation>
    <scope>FUNCTION</scope>
    <scope>DEVELOPMENTAL STAGE</scope>
    <scope>DISRUPTION PHENOTYPE</scope>
</reference>
<reference key="6">
    <citation type="journal article" date="2014" name="Mol. Biol. Cell">
        <title>Interaction of the HOPS complex with Syntaxin 17 mediates autophagosome clearance in Drosophila.</title>
        <authorList>
            <person name="Takats S."/>
            <person name="Pircs K."/>
            <person name="Nagy P."/>
            <person name="Varga A."/>
            <person name="Karpati M."/>
            <person name="Hegedus K."/>
            <person name="Kramer H."/>
            <person name="Kovacs A.L."/>
            <person name="Sass M."/>
            <person name="Juhasz G."/>
        </authorList>
    </citation>
    <scope>FUNCTION</scope>
    <scope>DISRUPTION PHENOTYPE</scope>
</reference>